<accession>C7Z6W1</accession>
<reference key="1">
    <citation type="journal article" date="2009" name="PLoS Genet.">
        <title>The genome of Nectria haematococca: contribution of supernumerary chromosomes to gene expansion.</title>
        <authorList>
            <person name="Coleman J.J."/>
            <person name="Rounsley S.D."/>
            <person name="Rodriguez-Carres M."/>
            <person name="Kuo A."/>
            <person name="Wasmann C.C."/>
            <person name="Grimwood J."/>
            <person name="Schmutz J."/>
            <person name="Taga M."/>
            <person name="White G.J."/>
            <person name="Zhou S."/>
            <person name="Schwartz D.C."/>
            <person name="Freitag M."/>
            <person name="Ma L.-J."/>
            <person name="Danchin E.G.J."/>
            <person name="Henrissat B."/>
            <person name="Coutinho P.M."/>
            <person name="Nelson D.R."/>
            <person name="Straney D."/>
            <person name="Napoli C.A."/>
            <person name="Barker B.M."/>
            <person name="Gribskov M."/>
            <person name="Rep M."/>
            <person name="Kroken S."/>
            <person name="Molnar I."/>
            <person name="Rensing C."/>
            <person name="Kennell J.C."/>
            <person name="Zamora J."/>
            <person name="Farman M.L."/>
            <person name="Selker E.U."/>
            <person name="Salamov A."/>
            <person name="Shapiro H."/>
            <person name="Pangilinan J."/>
            <person name="Lindquist E."/>
            <person name="Lamers C."/>
            <person name="Grigoriev I.V."/>
            <person name="Geiser D.M."/>
            <person name="Covert S.F."/>
            <person name="Temporini E."/>
            <person name="VanEtten H.D."/>
        </authorList>
    </citation>
    <scope>NUCLEOTIDE SEQUENCE [LARGE SCALE GENOMIC DNA]</scope>
    <source>
        <strain>ATCC MYA-4622 / CBS 123669 / FGSC 9596 / NRRL 45880 / 77-13-4</strain>
    </source>
</reference>
<gene>
    <name type="primary">LAP1</name>
    <name type="ORF">NECHADRAFT_99154</name>
</gene>
<dbReference type="EC" id="3.4.11.-"/>
<dbReference type="EMBL" id="GG698910">
    <property type="protein sequence ID" value="EEU40197.1"/>
    <property type="molecule type" value="Genomic_DNA"/>
</dbReference>
<dbReference type="RefSeq" id="XP_003045910.1">
    <property type="nucleotide sequence ID" value="XM_003045864.1"/>
</dbReference>
<dbReference type="SMR" id="C7Z6W1"/>
<dbReference type="FunCoup" id="C7Z6W1">
    <property type="interactions" value="27"/>
</dbReference>
<dbReference type="MEROPS" id="M28.022"/>
<dbReference type="GlyCosmos" id="C7Z6W1">
    <property type="glycosylation" value="1 site, No reported glycans"/>
</dbReference>
<dbReference type="EnsemblFungi" id="NechaT99154">
    <property type="protein sequence ID" value="NechaP99154"/>
    <property type="gene ID" value="NechaG99154"/>
</dbReference>
<dbReference type="GeneID" id="9668114"/>
<dbReference type="KEGG" id="nhe:NECHADRAFT_99154"/>
<dbReference type="VEuPathDB" id="FungiDB:NECHADRAFT_99154"/>
<dbReference type="eggNOG" id="KOG2195">
    <property type="taxonomic scope" value="Eukaryota"/>
</dbReference>
<dbReference type="HOGENOM" id="CLU_025866_0_0_1"/>
<dbReference type="InParanoid" id="C7Z6W1"/>
<dbReference type="OMA" id="GMLQQDM"/>
<dbReference type="OrthoDB" id="2214at2759"/>
<dbReference type="Proteomes" id="UP000005206">
    <property type="component" value="Unassembled WGS sequence"/>
</dbReference>
<dbReference type="GO" id="GO:0005576">
    <property type="term" value="C:extracellular region"/>
    <property type="evidence" value="ECO:0007669"/>
    <property type="project" value="UniProtKB-SubCell"/>
</dbReference>
<dbReference type="GO" id="GO:0004177">
    <property type="term" value="F:aminopeptidase activity"/>
    <property type="evidence" value="ECO:0007669"/>
    <property type="project" value="UniProtKB-KW"/>
</dbReference>
<dbReference type="GO" id="GO:0046872">
    <property type="term" value="F:metal ion binding"/>
    <property type="evidence" value="ECO:0007669"/>
    <property type="project" value="UniProtKB-KW"/>
</dbReference>
<dbReference type="GO" id="GO:0008235">
    <property type="term" value="F:metalloexopeptidase activity"/>
    <property type="evidence" value="ECO:0007669"/>
    <property type="project" value="InterPro"/>
</dbReference>
<dbReference type="GO" id="GO:0006508">
    <property type="term" value="P:proteolysis"/>
    <property type="evidence" value="ECO:0007669"/>
    <property type="project" value="UniProtKB-KW"/>
</dbReference>
<dbReference type="CDD" id="cd03879">
    <property type="entry name" value="M28_AAP"/>
    <property type="match status" value="1"/>
</dbReference>
<dbReference type="FunFam" id="3.40.630.10:FF:000042">
    <property type="entry name" value="Peptide hydrolase"/>
    <property type="match status" value="1"/>
</dbReference>
<dbReference type="Gene3D" id="3.40.630.10">
    <property type="entry name" value="Zn peptidases"/>
    <property type="match status" value="1"/>
</dbReference>
<dbReference type="InterPro" id="IPR018247">
    <property type="entry name" value="EF_Hand_1_Ca_BS"/>
</dbReference>
<dbReference type="InterPro" id="IPR045175">
    <property type="entry name" value="M28_fam"/>
</dbReference>
<dbReference type="InterPro" id="IPR007484">
    <property type="entry name" value="Peptidase_M28"/>
</dbReference>
<dbReference type="PANTHER" id="PTHR12147:SF56">
    <property type="entry name" value="AMINOPEPTIDASE YDR415C-RELATED"/>
    <property type="match status" value="1"/>
</dbReference>
<dbReference type="PANTHER" id="PTHR12147">
    <property type="entry name" value="METALLOPEPTIDASE M28 FAMILY MEMBER"/>
    <property type="match status" value="1"/>
</dbReference>
<dbReference type="Pfam" id="PF04389">
    <property type="entry name" value="Peptidase_M28"/>
    <property type="match status" value="1"/>
</dbReference>
<dbReference type="SUPFAM" id="SSF53187">
    <property type="entry name" value="Zn-dependent exopeptidases"/>
    <property type="match status" value="1"/>
</dbReference>
<dbReference type="PROSITE" id="PS00018">
    <property type="entry name" value="EF_HAND_1"/>
    <property type="match status" value="1"/>
</dbReference>
<proteinExistence type="inferred from homology"/>
<keyword id="KW-0031">Aminopeptidase</keyword>
<keyword id="KW-1015">Disulfide bond</keyword>
<keyword id="KW-0325">Glycoprotein</keyword>
<keyword id="KW-0378">Hydrolase</keyword>
<keyword id="KW-0479">Metal-binding</keyword>
<keyword id="KW-0645">Protease</keyword>
<keyword id="KW-1185">Reference proteome</keyword>
<keyword id="KW-0964">Secreted</keyword>
<keyword id="KW-0732">Signal</keyword>
<keyword id="KW-0862">Zinc</keyword>
<keyword id="KW-0865">Zymogen</keyword>
<comment type="function">
    <text evidence="1">Extracellular aminopeptidase that allows assimilation of proteinaceous substrates.</text>
</comment>
<comment type="cofactor">
    <cofactor evidence="1">
        <name>Zn(2+)</name>
        <dbReference type="ChEBI" id="CHEBI:29105"/>
    </cofactor>
    <text evidence="1">Binds 2 Zn(2+) ions per subunit.</text>
</comment>
<comment type="subunit">
    <text evidence="1">Monomer.</text>
</comment>
<comment type="subcellular location">
    <subcellularLocation>
        <location evidence="1">Secreted</location>
    </subcellularLocation>
</comment>
<comment type="similarity">
    <text evidence="3">Belongs to the peptidase M28 family. M28E subfamily.</text>
</comment>
<name>LAP1_FUSV7</name>
<organism>
    <name type="scientific">Fusarium vanettenii (strain ATCC MYA-4622 / CBS 123669 / FGSC 9596 / NRRL 45880 / 77-13-4)</name>
    <name type="common">Fusarium solani subsp. pisi</name>
    <dbReference type="NCBI Taxonomy" id="660122"/>
    <lineage>
        <taxon>Eukaryota</taxon>
        <taxon>Fungi</taxon>
        <taxon>Dikarya</taxon>
        <taxon>Ascomycota</taxon>
        <taxon>Pezizomycotina</taxon>
        <taxon>Sordariomycetes</taxon>
        <taxon>Hypocreomycetidae</taxon>
        <taxon>Hypocreales</taxon>
        <taxon>Nectriaceae</taxon>
        <taxon>Fusarium</taxon>
        <taxon>Fusarium solani species complex</taxon>
        <taxon>Fusarium vanettenii</taxon>
    </lineage>
</organism>
<evidence type="ECO:0000250" key="1"/>
<evidence type="ECO:0000255" key="2"/>
<evidence type="ECO:0000305" key="3"/>
<feature type="signal peptide" evidence="2">
    <location>
        <begin position="1"/>
        <end position="18"/>
    </location>
</feature>
<feature type="propeptide" id="PRO_0000412419" evidence="1">
    <location>
        <begin position="19"/>
        <end position="82"/>
    </location>
</feature>
<feature type="chain" id="PRO_0000412420" description="Leucine aminopeptidase 1">
    <location>
        <begin position="83"/>
        <end position="392"/>
    </location>
</feature>
<feature type="binding site" evidence="1">
    <location>
        <position position="182"/>
    </location>
    <ligand>
        <name>Zn(2+)</name>
        <dbReference type="ChEBI" id="CHEBI:29105"/>
        <label>1</label>
    </ligand>
</feature>
<feature type="binding site" evidence="1">
    <location>
        <position position="201"/>
    </location>
    <ligand>
        <name>Zn(2+)</name>
        <dbReference type="ChEBI" id="CHEBI:29105"/>
        <label>1</label>
    </ligand>
</feature>
<feature type="binding site" evidence="1">
    <location>
        <position position="201"/>
    </location>
    <ligand>
        <name>Zn(2+)</name>
        <dbReference type="ChEBI" id="CHEBI:29105"/>
        <label>2</label>
        <note>catalytic</note>
    </ligand>
</feature>
<feature type="binding site" evidence="1">
    <location>
        <position position="240"/>
    </location>
    <ligand>
        <name>Zn(2+)</name>
        <dbReference type="ChEBI" id="CHEBI:29105"/>
        <label>2</label>
        <note>catalytic</note>
    </ligand>
</feature>
<feature type="binding site" evidence="1">
    <location>
        <position position="267"/>
    </location>
    <ligand>
        <name>Zn(2+)</name>
        <dbReference type="ChEBI" id="CHEBI:29105"/>
        <label>1</label>
    </ligand>
</feature>
<feature type="binding site" evidence="1">
    <location>
        <position position="349"/>
    </location>
    <ligand>
        <name>Zn(2+)</name>
        <dbReference type="ChEBI" id="CHEBI:29105"/>
        <label>2</label>
        <note>catalytic</note>
    </ligand>
</feature>
<feature type="glycosylation site" description="N-linked (GlcNAc...) asparagine" evidence="2">
    <location>
        <position position="174"/>
    </location>
</feature>
<feature type="disulfide bond" evidence="1">
    <location>
        <begin position="316"/>
        <end position="320"/>
    </location>
</feature>
<sequence>MKFSQASLLAACLPAISARFIETAEADNVILKPDELYLIETAPGKTQWVTEDQKWELRRNGQRFMDITDTPSLGSTRLNAQTVSFPKKCVKQDEVADLSKNLEKKNMKANLEKLTSFHTRYYKSNYGLESSDWVLEKVNQIIKDAGAQDTVYAESFPHTWQQHSVIATIPGQSNSTVVIGAHQDSINLFLPSILAAPGADDDGSGTVTIMEVFRALLNSKDVVDGKAPNTIEFHWYSAEEGGLLGSQAIFQSYEQSGRDIKAMLQQDMTGYVQKTLDAGQPESVGVITDFVDPGLTTFIKTVVEEYCNIPWVETKCGYACSDHASASKAGYPSAFVIESAFEYSDPHIHTTDDNIKYLSFDHMLEHARMTLGLVYELGFYDFSDSSEDRGDL</sequence>
<protein>
    <recommendedName>
        <fullName>Leucine aminopeptidase 1</fullName>
        <ecNumber>3.4.11.-</ecNumber>
    </recommendedName>
    <alternativeName>
        <fullName>Leucyl aminopeptidase 1</fullName>
        <shortName>LAP1</shortName>
    </alternativeName>
</protein>